<keyword id="KW-0963">Cytoplasm</keyword>
<keyword id="KW-0342">GTP-binding</keyword>
<keyword id="KW-0378">Hydrolase</keyword>
<keyword id="KW-0547">Nucleotide-binding</keyword>
<keyword id="KW-1185">Reference proteome</keyword>
<keyword id="KW-0687">Ribonucleoprotein</keyword>
<keyword id="KW-0694">RNA-binding</keyword>
<keyword id="KW-0733">Signal recognition particle</keyword>
<gene>
    <name evidence="1" type="primary">srp54</name>
    <name type="ordered locus">Mthe_0369</name>
</gene>
<comment type="function">
    <text evidence="1">Involved in targeting and insertion of nascent membrane proteins into the cytoplasmic membrane. Binds to the hydrophobic signal sequence of the ribosome-nascent chain (RNC) as it emerges from the ribosomes. The SRP-RNC complex is then targeted to the cytoplasmic membrane where it interacts with the SRP receptor FtsY.</text>
</comment>
<comment type="catalytic activity">
    <reaction evidence="1">
        <text>GTP + H2O = GDP + phosphate + H(+)</text>
        <dbReference type="Rhea" id="RHEA:19669"/>
        <dbReference type="ChEBI" id="CHEBI:15377"/>
        <dbReference type="ChEBI" id="CHEBI:15378"/>
        <dbReference type="ChEBI" id="CHEBI:37565"/>
        <dbReference type="ChEBI" id="CHEBI:43474"/>
        <dbReference type="ChEBI" id="CHEBI:58189"/>
        <dbReference type="EC" id="3.6.5.4"/>
    </reaction>
</comment>
<comment type="subunit">
    <text evidence="1">Part of the signal recognition particle protein translocation system, which is composed of SRP and FtsY. Archaeal SRP consists of a 7S RNA molecule of 300 nucleotides and two protein subunits: SRP54 and SRP19.</text>
</comment>
<comment type="subcellular location">
    <subcellularLocation>
        <location evidence="1">Cytoplasm</location>
    </subcellularLocation>
    <text evidence="1">The SRP-RNC complex is targeted to the cytoplasmic membrane.</text>
</comment>
<comment type="domain">
    <text evidence="1">Composed of three domains: the N-terminal N domain, which is responsible for interactions with the ribosome, the central G domain, which binds GTP, and the C-terminal M domain, which binds the RNA and the signal sequence of the RNC.</text>
</comment>
<comment type="similarity">
    <text evidence="1">Belongs to the GTP-binding SRP family. SRP54 subfamily.</text>
</comment>
<protein>
    <recommendedName>
        <fullName evidence="1">Signal recognition particle 54 kDa protein</fullName>
        <shortName evidence="1">SRP54</shortName>
        <ecNumber evidence="1">3.6.5.4</ecNumber>
    </recommendedName>
</protein>
<name>SRP54_METTP</name>
<proteinExistence type="inferred from homology"/>
<evidence type="ECO:0000255" key="1">
    <source>
        <dbReference type="HAMAP-Rule" id="MF_00306"/>
    </source>
</evidence>
<accession>A0B638</accession>
<reference key="1">
    <citation type="submission" date="2006-10" db="EMBL/GenBank/DDBJ databases">
        <title>Complete sequence of Methanosaeta thermophila PT.</title>
        <authorList>
            <consortium name="US DOE Joint Genome Institute"/>
            <person name="Copeland A."/>
            <person name="Lucas S."/>
            <person name="Lapidus A."/>
            <person name="Barry K."/>
            <person name="Detter J.C."/>
            <person name="Glavina del Rio T."/>
            <person name="Hammon N."/>
            <person name="Israni S."/>
            <person name="Pitluck S."/>
            <person name="Chain P."/>
            <person name="Malfatti S."/>
            <person name="Shin M."/>
            <person name="Vergez L."/>
            <person name="Schmutz J."/>
            <person name="Larimer F."/>
            <person name="Land M."/>
            <person name="Hauser L."/>
            <person name="Kyrpides N."/>
            <person name="Kim E."/>
            <person name="Smith K.S."/>
            <person name="Ingram-Smith C."/>
            <person name="Richardson P."/>
        </authorList>
    </citation>
    <scope>NUCLEOTIDE SEQUENCE [LARGE SCALE GENOMIC DNA]</scope>
    <source>
        <strain>DSM 6194 / JCM 14653 / NBRC 101360 / PT</strain>
    </source>
</reference>
<dbReference type="EC" id="3.6.5.4" evidence="1"/>
<dbReference type="EMBL" id="CP000477">
    <property type="protein sequence ID" value="ABK14162.1"/>
    <property type="molecule type" value="Genomic_DNA"/>
</dbReference>
<dbReference type="RefSeq" id="WP_011695560.1">
    <property type="nucleotide sequence ID" value="NC_008553.1"/>
</dbReference>
<dbReference type="SMR" id="A0B638"/>
<dbReference type="STRING" id="349307.Mthe_0369"/>
<dbReference type="GeneID" id="4462703"/>
<dbReference type="KEGG" id="mtp:Mthe_0369"/>
<dbReference type="HOGENOM" id="CLU_009301_6_0_2"/>
<dbReference type="OrthoDB" id="52849at2157"/>
<dbReference type="Proteomes" id="UP000000674">
    <property type="component" value="Chromosome"/>
</dbReference>
<dbReference type="GO" id="GO:0048500">
    <property type="term" value="C:signal recognition particle"/>
    <property type="evidence" value="ECO:0007669"/>
    <property type="project" value="UniProtKB-UniRule"/>
</dbReference>
<dbReference type="GO" id="GO:0008312">
    <property type="term" value="F:7S RNA binding"/>
    <property type="evidence" value="ECO:0007669"/>
    <property type="project" value="UniProtKB-UniRule"/>
</dbReference>
<dbReference type="GO" id="GO:0016887">
    <property type="term" value="F:ATP hydrolysis activity"/>
    <property type="evidence" value="ECO:0007669"/>
    <property type="project" value="InterPro"/>
</dbReference>
<dbReference type="GO" id="GO:0005525">
    <property type="term" value="F:GTP binding"/>
    <property type="evidence" value="ECO:0007669"/>
    <property type="project" value="UniProtKB-UniRule"/>
</dbReference>
<dbReference type="GO" id="GO:0003924">
    <property type="term" value="F:GTPase activity"/>
    <property type="evidence" value="ECO:0007669"/>
    <property type="project" value="UniProtKB-UniRule"/>
</dbReference>
<dbReference type="GO" id="GO:0006614">
    <property type="term" value="P:SRP-dependent cotranslational protein targeting to membrane"/>
    <property type="evidence" value="ECO:0007669"/>
    <property type="project" value="InterPro"/>
</dbReference>
<dbReference type="CDD" id="cd17875">
    <property type="entry name" value="SRP54_G"/>
    <property type="match status" value="1"/>
</dbReference>
<dbReference type="FunFam" id="3.40.50.300:FF:000022">
    <property type="entry name" value="Signal recognition particle 54 kDa subunit"/>
    <property type="match status" value="1"/>
</dbReference>
<dbReference type="Gene3D" id="3.40.50.300">
    <property type="entry name" value="P-loop containing nucleotide triphosphate hydrolases"/>
    <property type="match status" value="1"/>
</dbReference>
<dbReference type="Gene3D" id="1.20.120.140">
    <property type="entry name" value="Signal recognition particle SRP54, nucleotide-binding domain"/>
    <property type="match status" value="1"/>
</dbReference>
<dbReference type="Gene3D" id="1.10.260.30">
    <property type="entry name" value="Signal recognition particle, SRP54 subunit, M-domain"/>
    <property type="match status" value="1"/>
</dbReference>
<dbReference type="HAMAP" id="MF_00306">
    <property type="entry name" value="SRP54"/>
    <property type="match status" value="1"/>
</dbReference>
<dbReference type="InterPro" id="IPR003593">
    <property type="entry name" value="AAA+_ATPase"/>
</dbReference>
<dbReference type="InterPro" id="IPR027417">
    <property type="entry name" value="P-loop_NTPase"/>
</dbReference>
<dbReference type="InterPro" id="IPR036891">
    <property type="entry name" value="Signal_recog_part_SRP54_M_sf"/>
</dbReference>
<dbReference type="InterPro" id="IPR013822">
    <property type="entry name" value="Signal_recog_particl_SRP54_hlx"/>
</dbReference>
<dbReference type="InterPro" id="IPR004125">
    <property type="entry name" value="Signal_recog_particle_SRP54_M"/>
</dbReference>
<dbReference type="InterPro" id="IPR036225">
    <property type="entry name" value="SRP/SRP_N"/>
</dbReference>
<dbReference type="InterPro" id="IPR022941">
    <property type="entry name" value="SRP54"/>
</dbReference>
<dbReference type="InterPro" id="IPR000897">
    <property type="entry name" value="SRP54_GTPase_dom"/>
</dbReference>
<dbReference type="InterPro" id="IPR042101">
    <property type="entry name" value="SRP54_N_sf"/>
</dbReference>
<dbReference type="PANTHER" id="PTHR11564">
    <property type="entry name" value="SIGNAL RECOGNITION PARTICLE 54K PROTEIN SRP54"/>
    <property type="match status" value="1"/>
</dbReference>
<dbReference type="PANTHER" id="PTHR11564:SF5">
    <property type="entry name" value="SIGNAL RECOGNITION PARTICLE SUBUNIT SRP54"/>
    <property type="match status" value="1"/>
</dbReference>
<dbReference type="Pfam" id="PF00448">
    <property type="entry name" value="SRP54"/>
    <property type="match status" value="1"/>
</dbReference>
<dbReference type="Pfam" id="PF02881">
    <property type="entry name" value="SRP54_N"/>
    <property type="match status" value="1"/>
</dbReference>
<dbReference type="Pfam" id="PF02978">
    <property type="entry name" value="SRP_SPB"/>
    <property type="match status" value="1"/>
</dbReference>
<dbReference type="SMART" id="SM00382">
    <property type="entry name" value="AAA"/>
    <property type="match status" value="1"/>
</dbReference>
<dbReference type="SMART" id="SM00962">
    <property type="entry name" value="SRP54"/>
    <property type="match status" value="1"/>
</dbReference>
<dbReference type="SMART" id="SM00963">
    <property type="entry name" value="SRP54_N"/>
    <property type="match status" value="1"/>
</dbReference>
<dbReference type="SUPFAM" id="SSF47364">
    <property type="entry name" value="Domain of the SRP/SRP receptor G-proteins"/>
    <property type="match status" value="1"/>
</dbReference>
<dbReference type="SUPFAM" id="SSF52540">
    <property type="entry name" value="P-loop containing nucleoside triphosphate hydrolases"/>
    <property type="match status" value="1"/>
</dbReference>
<dbReference type="SUPFAM" id="SSF47446">
    <property type="entry name" value="Signal peptide-binding domain"/>
    <property type="match status" value="1"/>
</dbReference>
<organism>
    <name type="scientific">Methanothrix thermoacetophila (strain DSM 6194 / JCM 14653 / NBRC 101360 / PT)</name>
    <name type="common">Methanosaeta thermophila</name>
    <dbReference type="NCBI Taxonomy" id="349307"/>
    <lineage>
        <taxon>Archaea</taxon>
        <taxon>Methanobacteriati</taxon>
        <taxon>Methanobacteriota</taxon>
        <taxon>Stenosarchaea group</taxon>
        <taxon>Methanomicrobia</taxon>
        <taxon>Methanotrichales</taxon>
        <taxon>Methanotrichaceae</taxon>
        <taxon>Methanothrix</taxon>
    </lineage>
</organism>
<feature type="chain" id="PRO_0000300756" description="Signal recognition particle 54 kDa protein">
    <location>
        <begin position="1"/>
        <end position="444"/>
    </location>
</feature>
<feature type="binding site" evidence="1">
    <location>
        <begin position="104"/>
        <end position="111"/>
    </location>
    <ligand>
        <name>GTP</name>
        <dbReference type="ChEBI" id="CHEBI:37565"/>
    </ligand>
</feature>
<feature type="binding site" evidence="1">
    <location>
        <begin position="184"/>
        <end position="188"/>
    </location>
    <ligand>
        <name>GTP</name>
        <dbReference type="ChEBI" id="CHEBI:37565"/>
    </ligand>
</feature>
<feature type="binding site" evidence="1">
    <location>
        <begin position="242"/>
        <end position="245"/>
    </location>
    <ligand>
        <name>GTP</name>
        <dbReference type="ChEBI" id="CHEBI:37565"/>
    </ligand>
</feature>
<sequence length="444" mass="48738">MVLDNLGGSLRGALKKIASATRVDKALVDDAVRDIQRALLQADVNVKLVMSLSNRIRERALNEKPPAGMNPREHVINIVYQELINLIGRGTDIPLKKQTIMLVGLQGSGKTTTAAKLATYFQRRGLRTAVICADTFRAGAYDQLKALCDRQGIFFYGEKGNENAPEVAKNGLEATKKYDVRIVDTAGRHALESDLIQEMKDIHAVVNADHKLLVMDAAIGQQASEQARAFNEAVGITGVIITKLDGTAKGGGALSAVAETKTSVAFIGVGETASDLEKFEADRFISRLLGMGDIKGLIEKAQEVQIESDVDVDAMMKGKFTLKDMYKQLEAMNKMGPLKQIMQMLPFGGIGIELSDKEYQVTKERLEAYRFIMDSMTDEELEDPKIINASRIKRIARGSGTRPELVKELLKSHAAMQKAIKGMRGGMGRMNMKKLMKRLGQPKV</sequence>